<comment type="function">
    <text evidence="9">GTPase-activating protein for ARF1 and, to a lesser extent, ARF5. Directly and specifically regulates the adapter protein 3 (AP-3)-dependent trafficking of proteins in the endosomal-lysosomal system.</text>
</comment>
<comment type="activity regulation">
    <text>GAP activity stimulated by phosphatidylinositol 3,4,5-trisphosphate (PIP3) and, to a lesser extent, by phosphatidylinositol 4,5-bisphosphate (PIP2). Phosphatidic acid potentiates PIP2 stimulation.</text>
</comment>
<comment type="subunit">
    <text evidence="10 12">Homodimer. Interacts with several subunits of the AP-3 protein complex: AP3M1, AP3S1 and AP3S2. Interacts with GUCY1A3 and GUCY1B3.</text>
</comment>
<comment type="interaction">
    <interactant intactId="EBI-7159788">
        <id>Q9UPQ3</id>
    </interactant>
    <interactant intactId="EBI-748350">
        <id>Q9UHP6</id>
        <label>RSPH14</label>
    </interactant>
    <organismsDiffer>false</organismsDiffer>
    <experiments>3</experiments>
</comment>
<comment type="interaction">
    <interactant intactId="EBI-7159788">
        <id>Q9UPQ3</id>
    </interactant>
    <interactant intactId="EBI-17208605">
        <id>Q76KX8</id>
        <label>ZNF534</label>
    </interactant>
    <organismsDiffer>false</organismsDiffer>
    <experiments>3</experiments>
</comment>
<comment type="subcellular location">
    <subcellularLocation>
        <location evidence="8 9">Cytoplasm</location>
    </subcellularLocation>
    <text>Associates with the endocytic compartment.</text>
</comment>
<comment type="alternative products">
    <event type="alternative splicing"/>
    <isoform>
        <id>Q9UPQ3-1</id>
        <name>1</name>
        <sequence type="displayed"/>
    </isoform>
    <isoform>
        <id>Q9UPQ3-2</id>
        <name>2</name>
        <sequence type="described" ref="VSP_011183"/>
    </isoform>
    <isoform>
        <id>Q9UPQ3-3</id>
        <name>3</name>
        <sequence type="described" ref="VSP_011181 VSP_011182"/>
    </isoform>
</comment>
<comment type="tissue specificity">
    <text evidence="8 9 12 15">Widely expressed.</text>
</comment>
<comment type="domain">
    <text>The PH domain mediates AP-3 binding.</text>
</comment>
<comment type="PTM">
    <text evidence="12">Phosphorylated on tyrosines.</text>
</comment>
<comment type="similarity">
    <text evidence="5 21">Belongs to the centaurin gamma-like family.</text>
</comment>
<comment type="sequence caution" evidence="21">
    <conflict type="miscellaneous discrepancy">
        <sequence resource="EMBL-CDS" id="AAH60814"/>
    </conflict>
    <text>A 4-nucleotides insertion of unknown origin disrupts the reading frame.</text>
</comment>
<comment type="sequence caution" evidence="21">
    <conflict type="erroneous initiation">
        <sequence resource="EMBL-CDS" id="BAA83051"/>
    </conflict>
    <text>Extended N-terminus.</text>
</comment>
<comment type="sequence caution" evidence="21">
    <conflict type="erroneous initiation">
        <sequence resource="EMBL-CDS" id="BAA91862"/>
    </conflict>
    <text>Truncated N-terminus.</text>
</comment>
<name>AGAP1_HUMAN</name>
<reference key="1">
    <citation type="journal article" date="2003" name="Mol. Cell. Biol.">
        <title>GGAPs, a new family of bifunctional GTP-binding and GTPase-activating proteins.</title>
        <authorList>
            <person name="Xia C."/>
            <person name="Ma W."/>
            <person name="Stafford L.J."/>
            <person name="Liu C."/>
            <person name="Gong L."/>
            <person name="Martin J.F."/>
            <person name="Liu M."/>
        </authorList>
    </citation>
    <scope>NUCLEOTIDE SEQUENCE [MRNA] (ISOFORM 2)</scope>
    <scope>VARIANT ILE-671</scope>
    <scope>TISSUE SPECIFICITY</scope>
    <scope>SUBCELLULAR LOCATION</scope>
    <scope>FUNCTION</scope>
    <source>
        <tissue>Heart</tissue>
    </source>
</reference>
<reference key="2">
    <citation type="submission" date="2001-08" db="EMBL/GenBank/DDBJ databases">
        <title>Kiaa1099 as a member (centaurin gamma2) of the centaurin ArfGAP protein family.</title>
        <authorList>
            <person name="Hong W."/>
        </authorList>
    </citation>
    <scope>NUCLEOTIDE SEQUENCE [MRNA] (ISOFORM 2)</scope>
    <scope>VARIANT ILE-671</scope>
</reference>
<reference key="3">
    <citation type="journal article" date="1999" name="DNA Res.">
        <title>Prediction of the coding sequences of unidentified human genes. XIV. The complete sequences of 100 new cDNA clones from brain which code for large proteins in vitro.</title>
        <authorList>
            <person name="Kikuno R."/>
            <person name="Nagase T."/>
            <person name="Ishikawa K."/>
            <person name="Hirosawa M."/>
            <person name="Miyajima N."/>
            <person name="Tanaka A."/>
            <person name="Kotani H."/>
            <person name="Nomura N."/>
            <person name="Ohara O."/>
        </authorList>
    </citation>
    <scope>NUCLEOTIDE SEQUENCE [LARGE SCALE MRNA] (ISOFORM 2)</scope>
    <scope>VARIANT ILE-671</scope>
    <source>
        <tissue>Brain</tissue>
    </source>
</reference>
<reference key="4">
    <citation type="journal article" date="2005" name="Nature">
        <title>Generation and annotation of the DNA sequences of human chromosomes 2 and 4.</title>
        <authorList>
            <person name="Hillier L.W."/>
            <person name="Graves T.A."/>
            <person name="Fulton R.S."/>
            <person name="Fulton L.A."/>
            <person name="Pepin K.H."/>
            <person name="Minx P."/>
            <person name="Wagner-McPherson C."/>
            <person name="Layman D."/>
            <person name="Wylie K."/>
            <person name="Sekhon M."/>
            <person name="Becker M.C."/>
            <person name="Fewell G.A."/>
            <person name="Delehaunty K.D."/>
            <person name="Miner T.L."/>
            <person name="Nash W.E."/>
            <person name="Kremitzki C."/>
            <person name="Oddy L."/>
            <person name="Du H."/>
            <person name="Sun H."/>
            <person name="Bradshaw-Cordum H."/>
            <person name="Ali J."/>
            <person name="Carter J."/>
            <person name="Cordes M."/>
            <person name="Harris A."/>
            <person name="Isak A."/>
            <person name="van Brunt A."/>
            <person name="Nguyen C."/>
            <person name="Du F."/>
            <person name="Courtney L."/>
            <person name="Kalicki J."/>
            <person name="Ozersky P."/>
            <person name="Abbott S."/>
            <person name="Armstrong J."/>
            <person name="Belter E.A."/>
            <person name="Caruso L."/>
            <person name="Cedroni M."/>
            <person name="Cotton M."/>
            <person name="Davidson T."/>
            <person name="Desai A."/>
            <person name="Elliott G."/>
            <person name="Erb T."/>
            <person name="Fronick C."/>
            <person name="Gaige T."/>
            <person name="Haakenson W."/>
            <person name="Haglund K."/>
            <person name="Holmes A."/>
            <person name="Harkins R."/>
            <person name="Kim K."/>
            <person name="Kruchowski S.S."/>
            <person name="Strong C.M."/>
            <person name="Grewal N."/>
            <person name="Goyea E."/>
            <person name="Hou S."/>
            <person name="Levy A."/>
            <person name="Martinka S."/>
            <person name="Mead K."/>
            <person name="McLellan M.D."/>
            <person name="Meyer R."/>
            <person name="Randall-Maher J."/>
            <person name="Tomlinson C."/>
            <person name="Dauphin-Kohlberg S."/>
            <person name="Kozlowicz-Reilly A."/>
            <person name="Shah N."/>
            <person name="Swearengen-Shahid S."/>
            <person name="Snider J."/>
            <person name="Strong J.T."/>
            <person name="Thompson J."/>
            <person name="Yoakum M."/>
            <person name="Leonard S."/>
            <person name="Pearman C."/>
            <person name="Trani L."/>
            <person name="Radionenko M."/>
            <person name="Waligorski J.E."/>
            <person name="Wang C."/>
            <person name="Rock S.M."/>
            <person name="Tin-Wollam A.-M."/>
            <person name="Maupin R."/>
            <person name="Latreille P."/>
            <person name="Wendl M.C."/>
            <person name="Yang S.-P."/>
            <person name="Pohl C."/>
            <person name="Wallis J.W."/>
            <person name="Spieth J."/>
            <person name="Bieri T.A."/>
            <person name="Berkowicz N."/>
            <person name="Nelson J.O."/>
            <person name="Osborne J."/>
            <person name="Ding L."/>
            <person name="Meyer R."/>
            <person name="Sabo A."/>
            <person name="Shotland Y."/>
            <person name="Sinha P."/>
            <person name="Wohldmann P.E."/>
            <person name="Cook L.L."/>
            <person name="Hickenbotham M.T."/>
            <person name="Eldred J."/>
            <person name="Williams D."/>
            <person name="Jones T.A."/>
            <person name="She X."/>
            <person name="Ciccarelli F.D."/>
            <person name="Izaurralde E."/>
            <person name="Taylor J."/>
            <person name="Schmutz J."/>
            <person name="Myers R.M."/>
            <person name="Cox D.R."/>
            <person name="Huang X."/>
            <person name="McPherson J.D."/>
            <person name="Mardis E.R."/>
            <person name="Clifton S.W."/>
            <person name="Warren W.C."/>
            <person name="Chinwalla A.T."/>
            <person name="Eddy S.R."/>
            <person name="Marra M.A."/>
            <person name="Ovcharenko I."/>
            <person name="Furey T.S."/>
            <person name="Miller W."/>
            <person name="Eichler E.E."/>
            <person name="Bork P."/>
            <person name="Suyama M."/>
            <person name="Torrents D."/>
            <person name="Waterston R.H."/>
            <person name="Wilson R.K."/>
        </authorList>
    </citation>
    <scope>NUCLEOTIDE SEQUENCE [LARGE SCALE GENOMIC DNA]</scope>
</reference>
<reference key="5">
    <citation type="journal article" date="2004" name="Genome Res.">
        <title>The status, quality, and expansion of the NIH full-length cDNA project: the Mammalian Gene Collection (MGC).</title>
        <authorList>
            <consortium name="The MGC Project Team"/>
        </authorList>
    </citation>
    <scope>NUCLEOTIDE SEQUENCE [LARGE SCALE MRNA] (ISOFORMS 1 AND 3)</scope>
    <scope>VARIANT GLY-148</scope>
    <source>
        <tissue>Placenta</tissue>
    </source>
</reference>
<reference key="6">
    <citation type="journal article" date="2004" name="Nat. Genet.">
        <title>Complete sequencing and characterization of 21,243 full-length human cDNAs.</title>
        <authorList>
            <person name="Ota T."/>
            <person name="Suzuki Y."/>
            <person name="Nishikawa T."/>
            <person name="Otsuki T."/>
            <person name="Sugiyama T."/>
            <person name="Irie R."/>
            <person name="Wakamatsu A."/>
            <person name="Hayashi K."/>
            <person name="Sato H."/>
            <person name="Nagai K."/>
            <person name="Kimura K."/>
            <person name="Makita H."/>
            <person name="Sekine M."/>
            <person name="Obayashi M."/>
            <person name="Nishi T."/>
            <person name="Shibahara T."/>
            <person name="Tanaka T."/>
            <person name="Ishii S."/>
            <person name="Yamamoto J."/>
            <person name="Saito K."/>
            <person name="Kawai Y."/>
            <person name="Isono Y."/>
            <person name="Nakamura Y."/>
            <person name="Nagahari K."/>
            <person name="Murakami K."/>
            <person name="Yasuda T."/>
            <person name="Iwayanagi T."/>
            <person name="Wagatsuma M."/>
            <person name="Shiratori A."/>
            <person name="Sudo H."/>
            <person name="Hosoiri T."/>
            <person name="Kaku Y."/>
            <person name="Kodaira H."/>
            <person name="Kondo H."/>
            <person name="Sugawara M."/>
            <person name="Takahashi M."/>
            <person name="Kanda K."/>
            <person name="Yokoi T."/>
            <person name="Furuya T."/>
            <person name="Kikkawa E."/>
            <person name="Omura Y."/>
            <person name="Abe K."/>
            <person name="Kamihara K."/>
            <person name="Katsuta N."/>
            <person name="Sato K."/>
            <person name="Tanikawa M."/>
            <person name="Yamazaki M."/>
            <person name="Ninomiya K."/>
            <person name="Ishibashi T."/>
            <person name="Yamashita H."/>
            <person name="Murakawa K."/>
            <person name="Fujimori K."/>
            <person name="Tanai H."/>
            <person name="Kimata M."/>
            <person name="Watanabe M."/>
            <person name="Hiraoka S."/>
            <person name="Chiba Y."/>
            <person name="Ishida S."/>
            <person name="Ono Y."/>
            <person name="Takiguchi S."/>
            <person name="Watanabe S."/>
            <person name="Yosida M."/>
            <person name="Hotuta T."/>
            <person name="Kusano J."/>
            <person name="Kanehori K."/>
            <person name="Takahashi-Fujii A."/>
            <person name="Hara H."/>
            <person name="Tanase T.-O."/>
            <person name="Nomura Y."/>
            <person name="Togiya S."/>
            <person name="Komai F."/>
            <person name="Hara R."/>
            <person name="Takeuchi K."/>
            <person name="Arita M."/>
            <person name="Imose N."/>
            <person name="Musashino K."/>
            <person name="Yuuki H."/>
            <person name="Oshima A."/>
            <person name="Sasaki N."/>
            <person name="Aotsuka S."/>
            <person name="Yoshikawa Y."/>
            <person name="Matsunawa H."/>
            <person name="Ichihara T."/>
            <person name="Shiohata N."/>
            <person name="Sano S."/>
            <person name="Moriya S."/>
            <person name="Momiyama H."/>
            <person name="Satoh N."/>
            <person name="Takami S."/>
            <person name="Terashima Y."/>
            <person name="Suzuki O."/>
            <person name="Nakagawa S."/>
            <person name="Senoh A."/>
            <person name="Mizoguchi H."/>
            <person name="Goto Y."/>
            <person name="Shimizu F."/>
            <person name="Wakebe H."/>
            <person name="Hishigaki H."/>
            <person name="Watanabe T."/>
            <person name="Sugiyama A."/>
            <person name="Takemoto M."/>
            <person name="Kawakami B."/>
            <person name="Yamazaki M."/>
            <person name="Watanabe K."/>
            <person name="Kumagai A."/>
            <person name="Itakura S."/>
            <person name="Fukuzumi Y."/>
            <person name="Fujimori Y."/>
            <person name="Komiyama M."/>
            <person name="Tashiro H."/>
            <person name="Tanigami A."/>
            <person name="Fujiwara T."/>
            <person name="Ono T."/>
            <person name="Yamada K."/>
            <person name="Fujii Y."/>
            <person name="Ozaki K."/>
            <person name="Hirao M."/>
            <person name="Ohmori Y."/>
            <person name="Kawabata A."/>
            <person name="Hikiji T."/>
            <person name="Kobatake N."/>
            <person name="Inagaki H."/>
            <person name="Ikema Y."/>
            <person name="Okamoto S."/>
            <person name="Okitani R."/>
            <person name="Kawakami T."/>
            <person name="Noguchi S."/>
            <person name="Itoh T."/>
            <person name="Shigeta K."/>
            <person name="Senba T."/>
            <person name="Matsumura K."/>
            <person name="Nakajima Y."/>
            <person name="Mizuno T."/>
            <person name="Morinaga M."/>
            <person name="Sasaki M."/>
            <person name="Togashi T."/>
            <person name="Oyama M."/>
            <person name="Hata H."/>
            <person name="Watanabe M."/>
            <person name="Komatsu T."/>
            <person name="Mizushima-Sugano J."/>
            <person name="Satoh T."/>
            <person name="Shirai Y."/>
            <person name="Takahashi Y."/>
            <person name="Nakagawa K."/>
            <person name="Okumura K."/>
            <person name="Nagase T."/>
            <person name="Nomura N."/>
            <person name="Kikuchi H."/>
            <person name="Masuho Y."/>
            <person name="Yamashita R."/>
            <person name="Nakai K."/>
            <person name="Yada T."/>
            <person name="Nakamura Y."/>
            <person name="Ohara O."/>
            <person name="Isogai T."/>
            <person name="Sugano S."/>
        </authorList>
    </citation>
    <scope>NUCLEOTIDE SEQUENCE [LARGE SCALE MRNA] OF 429-857 (ISOFORM 1)</scope>
    <scope>VARIANT ILE-671</scope>
    <source>
        <tissue>Teratocarcinoma</tissue>
    </source>
</reference>
<reference key="7">
    <citation type="journal article" date="2002" name="J. Biol. Chem.">
        <title>AGAP1, an endosome-associated, phosphoinositide-dependent ADP-ribosylation factor GTPase-activating protein that affects actin cytoskeleton.</title>
        <authorList>
            <person name="Nie Z."/>
            <person name="Stanley K.T."/>
            <person name="Stauffer S."/>
            <person name="Jacques K.M."/>
            <person name="Hirsch D.S."/>
            <person name="Takei J."/>
            <person name="Randazzo P.A."/>
        </authorList>
    </citation>
    <scope>CHARACTERIZATION</scope>
    <scope>SUBCELLULAR LOCATION</scope>
    <scope>TISSUE SPECIFICITY</scope>
    <scope>MUTAGENESIS OF CYS-647 AND ARG-652</scope>
</reference>
<reference key="8">
    <citation type="journal article" date="2003" name="Dev. Cell">
        <title>Specific regulation of the adaptor protein complex AP-3 by the Arf GAP AGAP1.</title>
        <authorList>
            <person name="Nie Z."/>
            <person name="Boehm M."/>
            <person name="Boja E.S."/>
            <person name="Vass W.C."/>
            <person name="Bonifacino J.S."/>
            <person name="Fales H.M."/>
            <person name="Randazzo P.A."/>
        </authorList>
    </citation>
    <scope>INTERACTION WITH THE AP-3 COMPLEX</scope>
</reference>
<reference key="9">
    <citation type="journal article" date="2004" name="J. Biol. Chem.">
        <title>AGAP1, a novel binding partner of nitric oxide-sensitive guanylyl cyclase.</title>
        <authorList>
            <person name="Meurer S."/>
            <person name="Pioch S."/>
            <person name="Wagner K."/>
            <person name="Mueller-Esterl W."/>
            <person name="Gross S."/>
        </authorList>
    </citation>
    <scope>SUBUNIT</scope>
    <scope>TISSUE SPECIFICITY</scope>
    <scope>PHOSPHORYLATION</scope>
    <scope>INTERACTION WITH GUCY1A3 AND GUCY1B3</scope>
</reference>
<reference key="10">
    <citation type="journal article" date="2005" name="J. Cell Sci.">
        <title>The Arf GAPs AGAP1 and AGAP2 distinguish between the adaptor protein complexes AP-1 and AP-3.</title>
        <authorList>
            <person name="Nie Z."/>
            <person name="Fei J."/>
            <person name="Premont R.T."/>
            <person name="Randazzo P.A."/>
        </authorList>
    </citation>
    <scope>TISSUE SPECIFICITY</scope>
</reference>
<reference key="11">
    <citation type="journal article" date="2008" name="J. Proteome Res.">
        <title>Combining protein-based IMAC, peptide-based IMAC, and MudPIT for efficient phosphoproteomic analysis.</title>
        <authorList>
            <person name="Cantin G.T."/>
            <person name="Yi W."/>
            <person name="Lu B."/>
            <person name="Park S.K."/>
            <person name="Xu T."/>
            <person name="Lee J.-D."/>
            <person name="Yates J.R. III"/>
        </authorList>
    </citation>
    <scope>PHOSPHORYLATION [LARGE SCALE ANALYSIS] AT THR-836</scope>
    <scope>IDENTIFICATION BY MASS SPECTROMETRY [LARGE SCALE ANALYSIS]</scope>
    <source>
        <tissue>Cervix carcinoma</tissue>
    </source>
</reference>
<reference key="12">
    <citation type="journal article" date="2012" name="Proc. Natl. Acad. Sci. U.S.A.">
        <title>N-terminal acetylome analyses and functional insights of the N-terminal acetyltransferase NatB.</title>
        <authorList>
            <person name="Van Damme P."/>
            <person name="Lasa M."/>
            <person name="Polevoda B."/>
            <person name="Gazquez C."/>
            <person name="Elosegui-Artola A."/>
            <person name="Kim D.S."/>
            <person name="De Juan-Pardo E."/>
            <person name="Demeyer K."/>
            <person name="Hole K."/>
            <person name="Larrea E."/>
            <person name="Timmerman E."/>
            <person name="Prieto J."/>
            <person name="Arnesen T."/>
            <person name="Sherman F."/>
            <person name="Gevaert K."/>
            <person name="Aldabe R."/>
        </authorList>
    </citation>
    <scope>ACETYLATION [LARGE SCALE ANALYSIS] AT MET-1</scope>
    <scope>IDENTIFICATION BY MASS SPECTROMETRY [LARGE SCALE ANALYSIS]</scope>
</reference>
<reference key="13">
    <citation type="journal article" date="2013" name="J. Proteome Res.">
        <title>Toward a comprehensive characterization of a human cancer cell phosphoproteome.</title>
        <authorList>
            <person name="Zhou H."/>
            <person name="Di Palma S."/>
            <person name="Preisinger C."/>
            <person name="Peng M."/>
            <person name="Polat A.N."/>
            <person name="Heck A.J."/>
            <person name="Mohammed S."/>
        </authorList>
    </citation>
    <scope>PHOSPHORYLATION [LARGE SCALE ANALYSIS] AT SER-521; SER-605 AND THR-836</scope>
    <scope>IDENTIFICATION BY MASS SPECTROMETRY [LARGE SCALE ANALYSIS]</scope>
    <source>
        <tissue>Cervix carcinoma</tissue>
        <tissue>Erythroleukemia</tissue>
    </source>
</reference>
<reference key="14">
    <citation type="journal article" date="2014" name="J. Proteomics">
        <title>An enzyme assisted RP-RPLC approach for in-depth analysis of human liver phosphoproteome.</title>
        <authorList>
            <person name="Bian Y."/>
            <person name="Song C."/>
            <person name="Cheng K."/>
            <person name="Dong M."/>
            <person name="Wang F."/>
            <person name="Huang J."/>
            <person name="Sun D."/>
            <person name="Wang L."/>
            <person name="Ye M."/>
            <person name="Zou H."/>
        </authorList>
    </citation>
    <scope>PHOSPHORYLATION [LARGE SCALE ANALYSIS] AT SER-521</scope>
    <scope>IDENTIFICATION BY MASS SPECTROMETRY [LARGE SCALE ANALYSIS]</scope>
    <source>
        <tissue>Liver</tissue>
    </source>
</reference>
<reference key="15">
    <citation type="journal article" date="2005" name="Am. J. Med. Genet. B Neuropsychiatr. Genet.">
        <title>Evaluation of the chromosome 2q37.3 gene CENTG2 as an autism susceptibility gene.</title>
        <authorList>
            <person name="Wassink T.H."/>
            <person name="Piven J."/>
            <person name="Vieland V.J."/>
            <person name="Jenkins L."/>
            <person name="Frantz R."/>
            <person name="Bartlett C.W."/>
            <person name="Goedken R."/>
            <person name="Childress D."/>
            <person name="Spence M.A."/>
            <person name="Smith M."/>
            <person name="Sheffield V.C."/>
        </authorList>
    </citation>
    <scope>VARIANTS GLY-82; ILE-671; GLY-798 AND THR-854</scope>
</reference>
<dbReference type="EMBL" id="AY033765">
    <property type="protein sequence ID" value="AAK56506.1"/>
    <property type="molecule type" value="mRNA"/>
</dbReference>
<dbReference type="EMBL" id="AF413078">
    <property type="protein sequence ID" value="AAL04172.1"/>
    <property type="molecule type" value="mRNA"/>
</dbReference>
<dbReference type="EMBL" id="AB029022">
    <property type="protein sequence ID" value="BAA83051.2"/>
    <property type="status" value="ALT_INIT"/>
    <property type="molecule type" value="mRNA"/>
</dbReference>
<dbReference type="EMBL" id="AC012305">
    <property type="status" value="NOT_ANNOTATED_CDS"/>
    <property type="molecule type" value="Genomic_DNA"/>
</dbReference>
<dbReference type="EMBL" id="AC019047">
    <property type="status" value="NOT_ANNOTATED_CDS"/>
    <property type="molecule type" value="Genomic_DNA"/>
</dbReference>
<dbReference type="EMBL" id="AC064874">
    <property type="status" value="NOT_ANNOTATED_CDS"/>
    <property type="molecule type" value="Genomic_DNA"/>
</dbReference>
<dbReference type="EMBL" id="AC073989">
    <property type="status" value="NOT_ANNOTATED_CDS"/>
    <property type="molecule type" value="Genomic_DNA"/>
</dbReference>
<dbReference type="EMBL" id="AC079400">
    <property type="status" value="NOT_ANNOTATED_CDS"/>
    <property type="molecule type" value="Genomic_DNA"/>
</dbReference>
<dbReference type="EMBL" id="BC060814">
    <property type="protein sequence ID" value="AAH60814.1"/>
    <property type="status" value="ALT_SEQ"/>
    <property type="molecule type" value="mRNA"/>
</dbReference>
<dbReference type="EMBL" id="BC140856">
    <property type="protein sequence ID" value="AAI40857.1"/>
    <property type="molecule type" value="mRNA"/>
</dbReference>
<dbReference type="EMBL" id="AK001722">
    <property type="protein sequence ID" value="BAA91862.1"/>
    <property type="status" value="ALT_INIT"/>
    <property type="molecule type" value="mRNA"/>
</dbReference>
<dbReference type="CCDS" id="CCDS2514.1">
    <molecule id="Q9UPQ3-2"/>
</dbReference>
<dbReference type="CCDS" id="CCDS33408.1">
    <molecule id="Q9UPQ3-1"/>
</dbReference>
<dbReference type="CCDS" id="CCDS58756.1">
    <molecule id="Q9UPQ3-3"/>
</dbReference>
<dbReference type="RefSeq" id="NP_001032208.1">
    <molecule id="Q9UPQ3-1"/>
    <property type="nucleotide sequence ID" value="NM_001037131.3"/>
</dbReference>
<dbReference type="RefSeq" id="NP_001231817.1">
    <molecule id="Q9UPQ3-3"/>
    <property type="nucleotide sequence ID" value="NM_001244888.2"/>
</dbReference>
<dbReference type="RefSeq" id="NP_055729.2">
    <molecule id="Q9UPQ3-2"/>
    <property type="nucleotide sequence ID" value="NM_014914.5"/>
</dbReference>
<dbReference type="PDB" id="7EB6">
    <property type="method" value="X-ray"/>
    <property type="resolution" value="3.01 A"/>
    <property type="chains" value="A=70-235"/>
</dbReference>
<dbReference type="PDBsum" id="7EB6"/>
<dbReference type="SMR" id="Q9UPQ3"/>
<dbReference type="BioGRID" id="125550">
    <property type="interactions" value="119"/>
</dbReference>
<dbReference type="CORUM" id="Q9UPQ3"/>
<dbReference type="FunCoup" id="Q9UPQ3">
    <property type="interactions" value="967"/>
</dbReference>
<dbReference type="IntAct" id="Q9UPQ3">
    <property type="interactions" value="40"/>
</dbReference>
<dbReference type="MINT" id="Q9UPQ3"/>
<dbReference type="STRING" id="9606.ENSP00000307634"/>
<dbReference type="GlyGen" id="Q9UPQ3">
    <property type="glycosylation" value="2 sites, 1 O-linked glycan (1 site)"/>
</dbReference>
<dbReference type="iPTMnet" id="Q9UPQ3"/>
<dbReference type="PhosphoSitePlus" id="Q9UPQ3"/>
<dbReference type="BioMuta" id="AGAP1"/>
<dbReference type="DMDM" id="160332373"/>
<dbReference type="jPOST" id="Q9UPQ3"/>
<dbReference type="MassIVE" id="Q9UPQ3"/>
<dbReference type="PaxDb" id="9606-ENSP00000307634"/>
<dbReference type="PeptideAtlas" id="Q9UPQ3"/>
<dbReference type="ProteomicsDB" id="85411">
    <molecule id="Q9UPQ3-1"/>
</dbReference>
<dbReference type="ProteomicsDB" id="85412">
    <molecule id="Q9UPQ3-2"/>
</dbReference>
<dbReference type="ProteomicsDB" id="85413">
    <molecule id="Q9UPQ3-3"/>
</dbReference>
<dbReference type="Pumba" id="Q9UPQ3"/>
<dbReference type="Antibodypedia" id="34463">
    <property type="antibodies" value="151 antibodies from 25 providers"/>
</dbReference>
<dbReference type="DNASU" id="116987"/>
<dbReference type="Ensembl" id="ENST00000304032.13">
    <molecule id="Q9UPQ3-1"/>
    <property type="protein sequence ID" value="ENSP00000307634.7"/>
    <property type="gene ID" value="ENSG00000157985.20"/>
</dbReference>
<dbReference type="Ensembl" id="ENST00000336665.9">
    <molecule id="Q9UPQ3-2"/>
    <property type="protein sequence ID" value="ENSP00000338378.5"/>
    <property type="gene ID" value="ENSG00000157985.20"/>
</dbReference>
<dbReference type="Ensembl" id="ENST00000409457.5">
    <molecule id="Q9UPQ3-3"/>
    <property type="protein sequence ID" value="ENSP00000387174.1"/>
    <property type="gene ID" value="ENSG00000157985.20"/>
</dbReference>
<dbReference type="GeneID" id="116987"/>
<dbReference type="KEGG" id="hsa:116987"/>
<dbReference type="MANE-Select" id="ENST00000304032.13">
    <property type="protein sequence ID" value="ENSP00000307634.7"/>
    <property type="RefSeq nucleotide sequence ID" value="NM_001037131.3"/>
    <property type="RefSeq protein sequence ID" value="NP_001032208.1"/>
</dbReference>
<dbReference type="UCSC" id="uc002vvs.4">
    <molecule id="Q9UPQ3-1"/>
    <property type="organism name" value="human"/>
</dbReference>
<dbReference type="AGR" id="HGNC:16922"/>
<dbReference type="CTD" id="116987"/>
<dbReference type="DisGeNET" id="116987"/>
<dbReference type="GeneCards" id="AGAP1"/>
<dbReference type="HGNC" id="HGNC:16922">
    <property type="gene designation" value="AGAP1"/>
</dbReference>
<dbReference type="HPA" id="ENSG00000157985">
    <property type="expression patterns" value="Tissue enhanced (retina)"/>
</dbReference>
<dbReference type="MalaCards" id="AGAP1"/>
<dbReference type="MIM" id="608651">
    <property type="type" value="gene"/>
</dbReference>
<dbReference type="neXtProt" id="NX_Q9UPQ3"/>
<dbReference type="OpenTargets" id="ENSG00000157985"/>
<dbReference type="PharmGKB" id="PA26412"/>
<dbReference type="VEuPathDB" id="HostDB:ENSG00000157985"/>
<dbReference type="eggNOG" id="KOG0705">
    <property type="taxonomic scope" value="Eukaryota"/>
</dbReference>
<dbReference type="GeneTree" id="ENSGT00940000154793"/>
<dbReference type="InParanoid" id="Q9UPQ3"/>
<dbReference type="OMA" id="WYGANIK"/>
<dbReference type="OrthoDB" id="6136903at2759"/>
<dbReference type="PAN-GO" id="Q9UPQ3">
    <property type="GO annotations" value="3 GO annotations based on evolutionary models"/>
</dbReference>
<dbReference type="PhylomeDB" id="Q9UPQ3"/>
<dbReference type="TreeFam" id="TF317762"/>
<dbReference type="PathwayCommons" id="Q9UPQ3"/>
<dbReference type="SignaLink" id="Q9UPQ3"/>
<dbReference type="BioGRID-ORCS" id="116987">
    <property type="hits" value="14 hits in 1154 CRISPR screens"/>
</dbReference>
<dbReference type="CD-CODE" id="FB4E32DD">
    <property type="entry name" value="Presynaptic clusters and postsynaptic densities"/>
</dbReference>
<dbReference type="ChiTaRS" id="AGAP1">
    <property type="organism name" value="human"/>
</dbReference>
<dbReference type="GeneWiki" id="CENTG2"/>
<dbReference type="GenomeRNAi" id="116987"/>
<dbReference type="Pharos" id="Q9UPQ3">
    <property type="development level" value="Tbio"/>
</dbReference>
<dbReference type="PRO" id="PR:Q9UPQ3"/>
<dbReference type="Proteomes" id="UP000005640">
    <property type="component" value="Chromosome 2"/>
</dbReference>
<dbReference type="RNAct" id="Q9UPQ3">
    <property type="molecule type" value="protein"/>
</dbReference>
<dbReference type="Bgee" id="ENSG00000157985">
    <property type="expression patterns" value="Expressed in frontal pole and 199 other cell types or tissues"/>
</dbReference>
<dbReference type="ExpressionAtlas" id="Q9UPQ3">
    <property type="expression patterns" value="baseline and differential"/>
</dbReference>
<dbReference type="GO" id="GO:0098845">
    <property type="term" value="C:postsynaptic endosome"/>
    <property type="evidence" value="ECO:0007669"/>
    <property type="project" value="Ensembl"/>
</dbReference>
<dbReference type="GO" id="GO:0005525">
    <property type="term" value="F:GTP binding"/>
    <property type="evidence" value="ECO:0007669"/>
    <property type="project" value="UniProtKB-KW"/>
</dbReference>
<dbReference type="GO" id="GO:0005096">
    <property type="term" value="F:GTPase activator activity"/>
    <property type="evidence" value="ECO:0000318"/>
    <property type="project" value="GO_Central"/>
</dbReference>
<dbReference type="GO" id="GO:0003924">
    <property type="term" value="F:GTPase activity"/>
    <property type="evidence" value="ECO:0000318"/>
    <property type="project" value="GO_Central"/>
</dbReference>
<dbReference type="GO" id="GO:0005543">
    <property type="term" value="F:phospholipid binding"/>
    <property type="evidence" value="ECO:0000314"/>
    <property type="project" value="FlyBase"/>
</dbReference>
<dbReference type="GO" id="GO:0008270">
    <property type="term" value="F:zinc ion binding"/>
    <property type="evidence" value="ECO:0007669"/>
    <property type="project" value="UniProtKB-KW"/>
</dbReference>
<dbReference type="GO" id="GO:0015031">
    <property type="term" value="P:protein transport"/>
    <property type="evidence" value="ECO:0007669"/>
    <property type="project" value="UniProtKB-KW"/>
</dbReference>
<dbReference type="GO" id="GO:0099159">
    <property type="term" value="P:regulation of modification of postsynaptic structure"/>
    <property type="evidence" value="ECO:0007669"/>
    <property type="project" value="Ensembl"/>
</dbReference>
<dbReference type="CDD" id="cd08853">
    <property type="entry name" value="ArfGap_AGAP2"/>
    <property type="match status" value="1"/>
</dbReference>
<dbReference type="CDD" id="cd04103">
    <property type="entry name" value="Centaurin_gamma"/>
    <property type="match status" value="1"/>
</dbReference>
<dbReference type="CDD" id="cd01250">
    <property type="entry name" value="PH_AGAP"/>
    <property type="match status" value="1"/>
</dbReference>
<dbReference type="FunFam" id="1.10.220.150:FF:000001">
    <property type="entry name" value="Arf-GAP with GTPase, ANK repeat and PH domain-containing protein 1"/>
    <property type="match status" value="1"/>
</dbReference>
<dbReference type="FunFam" id="1.25.40.20:FF:000027">
    <property type="entry name" value="Arf-GAP with GTPase, ANK repeat and PH domain-containing protein 1"/>
    <property type="match status" value="1"/>
</dbReference>
<dbReference type="FunFam" id="3.40.50.300:FF:000178">
    <property type="entry name" value="Arf-GAP with GTPase, ANK repeat and PH domain-containing protein 1"/>
    <property type="match status" value="1"/>
</dbReference>
<dbReference type="FunFam" id="2.30.29.30:FF:000421">
    <property type="entry name" value="Arf-GAP with GTPase, ANK repeat and PH domain-containing protein 1 isoform B"/>
    <property type="match status" value="1"/>
</dbReference>
<dbReference type="FunFam" id="2.30.29.30:FF:000199">
    <property type="entry name" value="Arf-GAP with GTPase, ANK repeat and PH domain-containing protein 3"/>
    <property type="match status" value="1"/>
</dbReference>
<dbReference type="Gene3D" id="1.25.40.20">
    <property type="entry name" value="Ankyrin repeat-containing domain"/>
    <property type="match status" value="1"/>
</dbReference>
<dbReference type="Gene3D" id="1.10.220.150">
    <property type="entry name" value="Arf GTPase activating protein"/>
    <property type="match status" value="1"/>
</dbReference>
<dbReference type="Gene3D" id="3.40.50.300">
    <property type="entry name" value="P-loop containing nucleotide triphosphate hydrolases"/>
    <property type="match status" value="1"/>
</dbReference>
<dbReference type="Gene3D" id="2.30.29.30">
    <property type="entry name" value="Pleckstrin-homology domain (PH domain)/Phosphotyrosine-binding domain (PTB)"/>
    <property type="match status" value="2"/>
</dbReference>
<dbReference type="InterPro" id="IPR002110">
    <property type="entry name" value="Ankyrin_rpt"/>
</dbReference>
<dbReference type="InterPro" id="IPR036770">
    <property type="entry name" value="Ankyrin_rpt-contain_sf"/>
</dbReference>
<dbReference type="InterPro" id="IPR051282">
    <property type="entry name" value="Arf-GAP_GTPase_ANK_PH"/>
</dbReference>
<dbReference type="InterPro" id="IPR037278">
    <property type="entry name" value="ARFGAP/RecO"/>
</dbReference>
<dbReference type="InterPro" id="IPR001164">
    <property type="entry name" value="ArfGAP_dom"/>
</dbReference>
<dbReference type="InterPro" id="IPR038508">
    <property type="entry name" value="ArfGAP_dom_sf"/>
</dbReference>
<dbReference type="InterPro" id="IPR027417">
    <property type="entry name" value="P-loop_NTPase"/>
</dbReference>
<dbReference type="InterPro" id="IPR011993">
    <property type="entry name" value="PH-like_dom_sf"/>
</dbReference>
<dbReference type="InterPro" id="IPR001849">
    <property type="entry name" value="PH_domain"/>
</dbReference>
<dbReference type="InterPro" id="IPR001806">
    <property type="entry name" value="Small_GTPase"/>
</dbReference>
<dbReference type="PANTHER" id="PTHR45819:SF1">
    <property type="entry name" value="ARF-GAP WITH GTPASE, ANK REPEAT AND PH DOMAIN-CONTAINING PROTEIN 1"/>
    <property type="match status" value="1"/>
</dbReference>
<dbReference type="PANTHER" id="PTHR45819">
    <property type="entry name" value="CENTAURIN-GAMMA-1A"/>
    <property type="match status" value="1"/>
</dbReference>
<dbReference type="Pfam" id="PF12796">
    <property type="entry name" value="Ank_2"/>
    <property type="match status" value="1"/>
</dbReference>
<dbReference type="Pfam" id="PF01412">
    <property type="entry name" value="ArfGap"/>
    <property type="match status" value="1"/>
</dbReference>
<dbReference type="Pfam" id="PF00071">
    <property type="entry name" value="Ras"/>
    <property type="match status" value="1"/>
</dbReference>
<dbReference type="PRINTS" id="PR00405">
    <property type="entry name" value="REVINTRACTNG"/>
</dbReference>
<dbReference type="SMART" id="SM00248">
    <property type="entry name" value="ANK"/>
    <property type="match status" value="2"/>
</dbReference>
<dbReference type="SMART" id="SM00105">
    <property type="entry name" value="ArfGap"/>
    <property type="match status" value="1"/>
</dbReference>
<dbReference type="SMART" id="SM00233">
    <property type="entry name" value="PH"/>
    <property type="match status" value="1"/>
</dbReference>
<dbReference type="SMART" id="SM00175">
    <property type="entry name" value="RAB"/>
    <property type="match status" value="1"/>
</dbReference>
<dbReference type="SMART" id="SM00173">
    <property type="entry name" value="RAS"/>
    <property type="match status" value="1"/>
</dbReference>
<dbReference type="SUPFAM" id="SSF48403">
    <property type="entry name" value="Ankyrin repeat"/>
    <property type="match status" value="1"/>
</dbReference>
<dbReference type="SUPFAM" id="SSF57863">
    <property type="entry name" value="ArfGap/RecO-like zinc finger"/>
    <property type="match status" value="1"/>
</dbReference>
<dbReference type="SUPFAM" id="SSF52540">
    <property type="entry name" value="P-loop containing nucleoside triphosphate hydrolases"/>
    <property type="match status" value="1"/>
</dbReference>
<dbReference type="SUPFAM" id="SSF50729">
    <property type="entry name" value="PH domain-like"/>
    <property type="match status" value="1"/>
</dbReference>
<dbReference type="PROSITE" id="PS50297">
    <property type="entry name" value="ANK_REP_REGION"/>
    <property type="match status" value="1"/>
</dbReference>
<dbReference type="PROSITE" id="PS50088">
    <property type="entry name" value="ANK_REPEAT"/>
    <property type="match status" value="1"/>
</dbReference>
<dbReference type="PROSITE" id="PS50115">
    <property type="entry name" value="ARFGAP"/>
    <property type="match status" value="1"/>
</dbReference>
<dbReference type="PROSITE" id="PS52057">
    <property type="entry name" value="GLD"/>
    <property type="match status" value="1"/>
</dbReference>
<dbReference type="PROSITE" id="PS50003">
    <property type="entry name" value="PH_DOMAIN"/>
    <property type="match status" value="1"/>
</dbReference>
<organism>
    <name type="scientific">Homo sapiens</name>
    <name type="common">Human</name>
    <dbReference type="NCBI Taxonomy" id="9606"/>
    <lineage>
        <taxon>Eukaryota</taxon>
        <taxon>Metazoa</taxon>
        <taxon>Chordata</taxon>
        <taxon>Craniata</taxon>
        <taxon>Vertebrata</taxon>
        <taxon>Euteleostomi</taxon>
        <taxon>Mammalia</taxon>
        <taxon>Eutheria</taxon>
        <taxon>Euarchontoglires</taxon>
        <taxon>Primates</taxon>
        <taxon>Haplorrhini</taxon>
        <taxon>Catarrhini</taxon>
        <taxon>Hominidae</taxon>
        <taxon>Homo</taxon>
    </lineage>
</organism>
<proteinExistence type="evidence at protein level"/>
<protein>
    <recommendedName>
        <fullName>Arf-GAP with GTPase, ANK repeat and PH domain-containing protein 1</fullName>
        <shortName>AGAP-1</shortName>
    </recommendedName>
    <alternativeName>
        <fullName>Centaurin-gamma-2</fullName>
        <shortName>Cnt-g2</shortName>
    </alternativeName>
    <alternativeName>
        <fullName>GTP-binding and GTPase-activating protein 1</fullName>
        <shortName>GGAP1</shortName>
    </alternativeName>
</protein>
<evidence type="ECO:0000250" key="1">
    <source>
        <dbReference type="UniProtKB" id="Q8BXK8"/>
    </source>
</evidence>
<evidence type="ECO:0000255" key="2"/>
<evidence type="ECO:0000255" key="3">
    <source>
        <dbReference type="PROSITE-ProRule" id="PRU00145"/>
    </source>
</evidence>
<evidence type="ECO:0000255" key="4">
    <source>
        <dbReference type="PROSITE-ProRule" id="PRU00288"/>
    </source>
</evidence>
<evidence type="ECO:0000255" key="5">
    <source>
        <dbReference type="PROSITE-ProRule" id="PRU01402"/>
    </source>
</evidence>
<evidence type="ECO:0000256" key="6">
    <source>
        <dbReference type="SAM" id="MobiDB-lite"/>
    </source>
</evidence>
<evidence type="ECO:0000269" key="7">
    <source>
    </source>
</evidence>
<evidence type="ECO:0000269" key="8">
    <source>
    </source>
</evidence>
<evidence type="ECO:0000269" key="9">
    <source>
    </source>
</evidence>
<evidence type="ECO:0000269" key="10">
    <source>
    </source>
</evidence>
<evidence type="ECO:0000269" key="11">
    <source>
    </source>
</evidence>
<evidence type="ECO:0000269" key="12">
    <source>
    </source>
</evidence>
<evidence type="ECO:0000269" key="13">
    <source>
    </source>
</evidence>
<evidence type="ECO:0000269" key="14">
    <source>
    </source>
</evidence>
<evidence type="ECO:0000269" key="15">
    <source>
    </source>
</evidence>
<evidence type="ECO:0000269" key="16">
    <source ref="2"/>
</evidence>
<evidence type="ECO:0000303" key="17">
    <source>
    </source>
</evidence>
<evidence type="ECO:0000303" key="18">
    <source>
    </source>
</evidence>
<evidence type="ECO:0000303" key="19">
    <source>
    </source>
</evidence>
<evidence type="ECO:0000303" key="20">
    <source ref="2"/>
</evidence>
<evidence type="ECO:0000305" key="21"/>
<evidence type="ECO:0007744" key="22">
    <source>
    </source>
</evidence>
<evidence type="ECO:0007744" key="23">
    <source>
    </source>
</evidence>
<evidence type="ECO:0007744" key="24">
    <source>
    </source>
</evidence>
<evidence type="ECO:0007744" key="25">
    <source>
    </source>
</evidence>
<evidence type="ECO:0007829" key="26">
    <source>
        <dbReference type="PDB" id="7EB6"/>
    </source>
</evidence>
<sequence>MNYQQQLANSAAIRAEIQRFESVHPNIYSIYELLERVEEPVLQNQIREHVIAIEDAFVNSQEWTLSRSVPELKVGIVGNLASGKSALVHRYLTGTYVQEESPEGGRFKKEIVVDGQSYLLLIRDEGGPPEAQFAMWVDAVIFVFSLEDEISFQTVYHYYSRMANYRNTSEIPLVLVGTQDAISSANPRVIDDARARKLSNDLKRCTYYETCATYGLNVERVFQDVAQKIVATRKKQQLSIGPCKSLPNSPSHSSVCSAQVSAVHISQTSNGGGSLSDYSSSVPSTPSTSQKELRIDVPPTANTPTPVRKQSKRRSNLFTSRKGSDPDKEKKGLESRADSIGSGRAIPIKQGMLLKRSGKSLNKEWKKKYVTLCDNGVLTYHPSLHDYMQNVHGKEIDLLRTTVKVPGKRPPRATSACAPISSPKTNGLSKDMSSLHISPNSGNVTSASGSQMASGISLVSFNSRPDGMHQRSYSVSSADQWSEATVIANSAISSDTGLGDSVCSSPSISSTTSPKLDPPPSPHANRKKHRRKKSTSNFKADGLSGTAEEQEENFEFIIVSLTGQTWHFEATTYEERDAWVQAIESQILASLQSCESSKNKSRLTSQSEAMALQSIRNMRGNSHCVDCETQNPNWASLNLGALMCIECSGIHRNLGTHLSRVRSLDLDDWPVELIKVMSSIGNELANSVWEESSQGRTKPSVDSTREEKERWIRAKYEQKLFLAPLPCTELSLGQHLLRATADEDLRTAILLLAHGSRDEVNETCGEGDGRTALHLACRKGNVVLAQLLIWYGVDVTARDAHGNTALAYARQASSQECIDVLLQYGCPDERFVLMATPNLSRRNNNRNNSSGRVPTII</sequence>
<feature type="chain" id="PRO_0000074218" description="Arf-GAP with GTPase, ANK repeat and PH domain-containing protein 1">
    <location>
        <begin position="1"/>
        <end position="857"/>
    </location>
</feature>
<feature type="domain" description="GLD" evidence="5">
    <location>
        <begin position="67"/>
        <end position="241"/>
    </location>
</feature>
<feature type="domain" description="PH" evidence="3">
    <location>
        <begin position="346"/>
        <end position="588"/>
    </location>
</feature>
<feature type="domain" description="Arf-GAP" evidence="4">
    <location>
        <begin position="609"/>
        <end position="729"/>
    </location>
</feature>
<feature type="repeat" description="ANK 1">
    <location>
        <begin position="768"/>
        <end position="797"/>
    </location>
</feature>
<feature type="repeat" description="ANK 2">
    <location>
        <begin position="801"/>
        <end position="830"/>
    </location>
</feature>
<feature type="zinc finger region" description="C4-type" evidence="4">
    <location>
        <begin position="624"/>
        <end position="647"/>
    </location>
</feature>
<feature type="region of interest" description="Small GTPase-like">
    <location>
        <begin position="66"/>
        <end position="276"/>
    </location>
</feature>
<feature type="region of interest" description="Disordered" evidence="6">
    <location>
        <begin position="267"/>
        <end position="343"/>
    </location>
</feature>
<feature type="region of interest" description="Disordered" evidence="6">
    <location>
        <begin position="406"/>
        <end position="449"/>
    </location>
</feature>
<feature type="region of interest" description="Disordered" evidence="6">
    <location>
        <begin position="496"/>
        <end position="547"/>
    </location>
</feature>
<feature type="compositionally biased region" description="Low complexity" evidence="6">
    <location>
        <begin position="275"/>
        <end position="289"/>
    </location>
</feature>
<feature type="compositionally biased region" description="Basic and acidic residues" evidence="6">
    <location>
        <begin position="322"/>
        <end position="337"/>
    </location>
</feature>
<feature type="compositionally biased region" description="Polar residues" evidence="6">
    <location>
        <begin position="422"/>
        <end position="449"/>
    </location>
</feature>
<feature type="compositionally biased region" description="Low complexity" evidence="6">
    <location>
        <begin position="504"/>
        <end position="514"/>
    </location>
</feature>
<feature type="compositionally biased region" description="Basic residues" evidence="6">
    <location>
        <begin position="524"/>
        <end position="534"/>
    </location>
</feature>
<feature type="binding site" evidence="2">
    <location>
        <begin position="78"/>
        <end position="85"/>
    </location>
    <ligand>
        <name>GTP</name>
        <dbReference type="ChEBI" id="CHEBI:37565"/>
    </ligand>
</feature>
<feature type="binding site" evidence="2">
    <location>
        <begin position="122"/>
        <end position="126"/>
    </location>
    <ligand>
        <name>GTP</name>
        <dbReference type="ChEBI" id="CHEBI:37565"/>
    </ligand>
</feature>
<feature type="binding site" evidence="2">
    <location>
        <begin position="178"/>
        <end position="181"/>
    </location>
    <ligand>
        <name>GTP</name>
        <dbReference type="ChEBI" id="CHEBI:37565"/>
    </ligand>
</feature>
<feature type="modified residue" description="N-acetylmethionine" evidence="23">
    <location>
        <position position="1"/>
    </location>
</feature>
<feature type="modified residue" description="Phosphoserine" evidence="24 25">
    <location>
        <position position="521"/>
    </location>
</feature>
<feature type="modified residue" description="Phosphoserine" evidence="24">
    <location>
        <position position="605"/>
    </location>
</feature>
<feature type="modified residue" description="Phosphoserine" evidence="1">
    <location>
        <position position="663"/>
    </location>
</feature>
<feature type="modified residue" description="Phosphothreonine" evidence="22 24">
    <location>
        <position position="836"/>
    </location>
</feature>
<feature type="splice variant" id="VSP_011181" description="In isoform 3." evidence="19">
    <original>MLLKRSGKSLNKEWKKKYVTLCDNGVLTYHPSLHDYMQNVHGKEIDLLRTTVKV</original>
    <variation>LPFFVLALTASTYLRPAGARARQSSPWPGPRGGQTSPHCAEGPQSAQLSGAMMN</variation>
    <location>
        <begin position="352"/>
        <end position="405"/>
    </location>
</feature>
<feature type="splice variant" id="VSP_011182" description="In isoform 3." evidence="19">
    <location>
        <begin position="406"/>
        <end position="857"/>
    </location>
</feature>
<feature type="splice variant" id="VSP_011183" description="In isoform 2." evidence="17 18 20">
    <location>
        <begin position="442"/>
        <end position="494"/>
    </location>
</feature>
<feature type="sequence variant" id="VAR_026446" description="In an autistic patient." evidence="14">
    <original>S</original>
    <variation>G</variation>
    <location>
        <position position="82"/>
    </location>
</feature>
<feature type="sequence variant" id="VAR_026447" description="In dbSNP:rs17855721." evidence="13">
    <original>D</original>
    <variation>G</variation>
    <location>
        <position position="148"/>
    </location>
</feature>
<feature type="sequence variant" id="VAR_026448" description="In dbSNP:rs2034648." evidence="7 9 11 14 16">
    <original>V</original>
    <variation>I</variation>
    <location>
        <position position="671"/>
    </location>
</feature>
<feature type="sequence variant" id="VAR_026449" description="In an autistic patient; dbSNP:rs762355360." evidence="14">
    <original>R</original>
    <variation>G</variation>
    <location>
        <position position="798"/>
    </location>
</feature>
<feature type="sequence variant" id="VAR_019550" description="In dbSNP:rs774221910.">
    <original>E</original>
    <variation>K</variation>
    <location>
        <position position="829"/>
    </location>
</feature>
<feature type="sequence variant" id="VAR_026450" description="In a family with an autistic patient; dbSNP:rs368301945." evidence="14">
    <original>P</original>
    <variation>T</variation>
    <location>
        <position position="854"/>
    </location>
</feature>
<feature type="mutagenesis site" description="Loss of GAP activity." evidence="8">
    <original>C</original>
    <variation>S</variation>
    <location>
        <position position="647"/>
    </location>
</feature>
<feature type="mutagenesis site" description="Loss of GAP activity. No effect on AP-3-binding." evidence="8">
    <original>R</original>
    <variation>K</variation>
    <location>
        <position position="652"/>
    </location>
</feature>
<feature type="sequence conflict" description="In Ref. 1; AAK56506, 2; AAL04172 and 3; BAA83051." evidence="21" ref="1 2 3">
    <original>T</original>
    <variation>I</variation>
    <location>
        <position position="288"/>
    </location>
</feature>
<feature type="strand" evidence="26">
    <location>
        <begin position="71"/>
        <end position="78"/>
    </location>
</feature>
<feature type="helix" evidence="26">
    <location>
        <begin position="84"/>
        <end position="93"/>
    </location>
</feature>
<feature type="strand" evidence="26">
    <location>
        <begin position="105"/>
        <end position="113"/>
    </location>
</feature>
<feature type="strand" evidence="26">
    <location>
        <begin position="116"/>
        <end position="124"/>
    </location>
</feature>
<feature type="helix" evidence="26">
    <location>
        <begin position="131"/>
        <end position="136"/>
    </location>
</feature>
<feature type="strand" evidence="26">
    <location>
        <begin position="138"/>
        <end position="145"/>
    </location>
</feature>
<feature type="helix" evidence="26">
    <location>
        <begin position="149"/>
        <end position="163"/>
    </location>
</feature>
<feature type="strand" evidence="26">
    <location>
        <begin position="173"/>
        <end position="178"/>
    </location>
</feature>
<feature type="strand" evidence="26">
    <location>
        <begin position="183"/>
        <end position="186"/>
    </location>
</feature>
<feature type="helix" evidence="26">
    <location>
        <begin position="192"/>
        <end position="201"/>
    </location>
</feature>
<feature type="strand" evidence="26">
    <location>
        <begin position="206"/>
        <end position="210"/>
    </location>
</feature>
<feature type="helix" evidence="26">
    <location>
        <begin position="218"/>
        <end position="231"/>
    </location>
</feature>
<gene>
    <name type="primary">AGAP1</name>
    <name type="synonym">CENTG2</name>
    <name type="synonym">KIAA1099</name>
</gene>
<keyword id="KW-0002">3D-structure</keyword>
<keyword id="KW-0007">Acetylation</keyword>
<keyword id="KW-0025">Alternative splicing</keyword>
<keyword id="KW-0040">ANK repeat</keyword>
<keyword id="KW-0963">Cytoplasm</keyword>
<keyword id="KW-0342">GTP-binding</keyword>
<keyword id="KW-0343">GTPase activation</keyword>
<keyword id="KW-0479">Metal-binding</keyword>
<keyword id="KW-0547">Nucleotide-binding</keyword>
<keyword id="KW-0597">Phosphoprotein</keyword>
<keyword id="KW-0653">Protein transport</keyword>
<keyword id="KW-1267">Proteomics identification</keyword>
<keyword id="KW-1185">Reference proteome</keyword>
<keyword id="KW-0677">Repeat</keyword>
<keyword id="KW-0813">Transport</keyword>
<keyword id="KW-0862">Zinc</keyword>
<keyword id="KW-0863">Zinc-finger</keyword>
<accession>Q9UPQ3</accession>
<accession>B2RTX7</accession>
<accession>Q541S5</accession>
<accession>Q6P9D7</accession>
<accession>Q9NV93</accession>